<comment type="function">
    <text evidence="1">Involved in the gluconeogenesis. Catalyzes the conversion of oxaloacetate (OAA) to phosphoenolpyruvate (PEP) through direct phosphoryl transfer between the nucleoside triphosphate and OAA.</text>
</comment>
<comment type="catalytic activity">
    <reaction evidence="1">
        <text>oxaloacetate + ATP = phosphoenolpyruvate + ADP + CO2</text>
        <dbReference type="Rhea" id="RHEA:18617"/>
        <dbReference type="ChEBI" id="CHEBI:16452"/>
        <dbReference type="ChEBI" id="CHEBI:16526"/>
        <dbReference type="ChEBI" id="CHEBI:30616"/>
        <dbReference type="ChEBI" id="CHEBI:58702"/>
        <dbReference type="ChEBI" id="CHEBI:456216"/>
        <dbReference type="EC" id="4.1.1.49"/>
    </reaction>
</comment>
<comment type="cofactor">
    <cofactor evidence="1">
        <name>Mn(2+)</name>
        <dbReference type="ChEBI" id="CHEBI:29035"/>
    </cofactor>
    <text evidence="1">Binds 1 Mn(2+) ion per subunit.</text>
</comment>
<comment type="pathway">
    <text evidence="1">Carbohydrate biosynthesis; gluconeogenesis.</text>
</comment>
<comment type="subunit">
    <text evidence="1">Monomer.</text>
</comment>
<comment type="subcellular location">
    <subcellularLocation>
        <location evidence="1">Cytoplasm</location>
    </subcellularLocation>
</comment>
<comment type="similarity">
    <text evidence="1">Belongs to the phosphoenolpyruvate carboxykinase (ATP) family.</text>
</comment>
<sequence>MTDLNKVVKELEALGIYDVKEVVYNPSYEQLFEEETKPGLEGFEKGTLTTTGAVAVDTGIFTGRSPKDKYIVLDEKTKDTVWWTSETAKNDNKPMNQATWQSLKDLVTNQLSRKRLFVVDGFCGASEHDRIAVRIVTEVAWQAHFVKNMFIRPTEEQLKNFEPDFVVMNGSKVTNPNWKEQGLNSENFVAFNLTERIQLIGGTWYGGEMKKGMFSMMNYFLPLKGVGAMHCSANVGKDGDVAIFFGLSGTGKTTLSTDPKRELIGDDEHGWDDVGIFNFEGGCYAKTIHLSEENEPDIYRAIRRDALLENVVVRSDGSVDFDDGSKTENTRVSYPIYHIDNIVKPVSRAGHATKVIFLTADAFGVLPPVSKLTPEQTKYYFLSGFTAKLAGTERGITEPTPTFSACFGAAFLTLHPTQYAEVLVKRMQAAGAEAYLVNTGWNGTGKRISIKDTRGIIDAILDGSIEKAEMGELPIFNLAIPKALPGVDSAILDPRDTYADKAQWQSKAEDLTGRFVKNFVKYATNEEGKALIAAGPKA</sequence>
<evidence type="ECO:0000255" key="1">
    <source>
        <dbReference type="HAMAP-Rule" id="MF_00453"/>
    </source>
</evidence>
<feature type="chain" id="PRO_1000026328" description="Phosphoenolpyruvate carboxykinase (ATP)">
    <location>
        <begin position="1"/>
        <end position="538"/>
    </location>
</feature>
<feature type="binding site" evidence="1">
    <location>
        <position position="64"/>
    </location>
    <ligand>
        <name>substrate</name>
    </ligand>
</feature>
<feature type="binding site" evidence="1">
    <location>
        <position position="205"/>
    </location>
    <ligand>
        <name>substrate</name>
    </ligand>
</feature>
<feature type="binding site" evidence="1">
    <location>
        <position position="211"/>
    </location>
    <ligand>
        <name>ATP</name>
        <dbReference type="ChEBI" id="CHEBI:30616"/>
    </ligand>
</feature>
<feature type="binding site" evidence="1">
    <location>
        <position position="211"/>
    </location>
    <ligand>
        <name>Mn(2+)</name>
        <dbReference type="ChEBI" id="CHEBI:29035"/>
    </ligand>
</feature>
<feature type="binding site" evidence="1">
    <location>
        <position position="211"/>
    </location>
    <ligand>
        <name>substrate</name>
    </ligand>
</feature>
<feature type="binding site" evidence="1">
    <location>
        <position position="230"/>
    </location>
    <ligand>
        <name>ATP</name>
        <dbReference type="ChEBI" id="CHEBI:30616"/>
    </ligand>
</feature>
<feature type="binding site" evidence="1">
    <location>
        <position position="230"/>
    </location>
    <ligand>
        <name>Mn(2+)</name>
        <dbReference type="ChEBI" id="CHEBI:29035"/>
    </ligand>
</feature>
<feature type="binding site" evidence="1">
    <location>
        <begin position="246"/>
        <end position="254"/>
    </location>
    <ligand>
        <name>ATP</name>
        <dbReference type="ChEBI" id="CHEBI:30616"/>
    </ligand>
</feature>
<feature type="binding site" evidence="1">
    <location>
        <position position="267"/>
    </location>
    <ligand>
        <name>Mn(2+)</name>
        <dbReference type="ChEBI" id="CHEBI:29035"/>
    </ligand>
</feature>
<feature type="binding site" evidence="1">
    <location>
        <position position="295"/>
    </location>
    <ligand>
        <name>ATP</name>
        <dbReference type="ChEBI" id="CHEBI:30616"/>
    </ligand>
</feature>
<feature type="binding site" evidence="1">
    <location>
        <position position="331"/>
    </location>
    <ligand>
        <name>ATP</name>
        <dbReference type="ChEBI" id="CHEBI:30616"/>
    </ligand>
</feature>
<feature type="binding site" evidence="1">
    <location>
        <position position="331"/>
    </location>
    <ligand>
        <name>substrate</name>
    </ligand>
</feature>
<feature type="binding site" evidence="1">
    <location>
        <begin position="447"/>
        <end position="448"/>
    </location>
    <ligand>
        <name>ATP</name>
        <dbReference type="ChEBI" id="CHEBI:30616"/>
    </ligand>
</feature>
<feature type="binding site" evidence="1">
    <location>
        <position position="453"/>
    </location>
    <ligand>
        <name>ATP</name>
        <dbReference type="ChEBI" id="CHEBI:30616"/>
    </ligand>
</feature>
<reference key="1">
    <citation type="journal article" date="2007" name="Genome Biol.">
        <title>Characterization and modeling of the Haemophilus influenzae core and supragenomes based on the complete genomic sequences of Rd and 12 clinical nontypeable strains.</title>
        <authorList>
            <person name="Hogg J.S."/>
            <person name="Hu F.Z."/>
            <person name="Janto B."/>
            <person name="Boissy R."/>
            <person name="Hayes J."/>
            <person name="Keefe R."/>
            <person name="Post J.C."/>
            <person name="Ehrlich G.D."/>
        </authorList>
    </citation>
    <scope>NUCLEOTIDE SEQUENCE [LARGE SCALE GENOMIC DNA]</scope>
    <source>
        <strain>PittGG</strain>
    </source>
</reference>
<name>PCKA_HAEIG</name>
<accession>A5UHW1</accession>
<protein>
    <recommendedName>
        <fullName evidence="1">Phosphoenolpyruvate carboxykinase (ATP)</fullName>
        <shortName evidence="1">PCK</shortName>
        <shortName evidence="1">PEP carboxykinase</shortName>
        <shortName evidence="1">PEPCK</shortName>
        <ecNumber evidence="1">4.1.1.49</ecNumber>
    </recommendedName>
</protein>
<dbReference type="EC" id="4.1.1.49" evidence="1"/>
<dbReference type="EMBL" id="CP000672">
    <property type="protein sequence ID" value="ABR00367.1"/>
    <property type="molecule type" value="Genomic_DNA"/>
</dbReference>
<dbReference type="SMR" id="A5UHW1"/>
<dbReference type="KEGG" id="hiq:CGSHiGG_07540"/>
<dbReference type="HOGENOM" id="CLU_018247_0_1_6"/>
<dbReference type="UniPathway" id="UPA00138"/>
<dbReference type="Proteomes" id="UP000001990">
    <property type="component" value="Chromosome"/>
</dbReference>
<dbReference type="GO" id="GO:0005829">
    <property type="term" value="C:cytosol"/>
    <property type="evidence" value="ECO:0007669"/>
    <property type="project" value="TreeGrafter"/>
</dbReference>
<dbReference type="GO" id="GO:0005524">
    <property type="term" value="F:ATP binding"/>
    <property type="evidence" value="ECO:0007669"/>
    <property type="project" value="UniProtKB-UniRule"/>
</dbReference>
<dbReference type="GO" id="GO:0046872">
    <property type="term" value="F:metal ion binding"/>
    <property type="evidence" value="ECO:0007669"/>
    <property type="project" value="UniProtKB-KW"/>
</dbReference>
<dbReference type="GO" id="GO:0004612">
    <property type="term" value="F:phosphoenolpyruvate carboxykinase (ATP) activity"/>
    <property type="evidence" value="ECO:0007669"/>
    <property type="project" value="UniProtKB-UniRule"/>
</dbReference>
<dbReference type="GO" id="GO:0006094">
    <property type="term" value="P:gluconeogenesis"/>
    <property type="evidence" value="ECO:0007669"/>
    <property type="project" value="UniProtKB-UniRule"/>
</dbReference>
<dbReference type="CDD" id="cd00484">
    <property type="entry name" value="PEPCK_ATP"/>
    <property type="match status" value="1"/>
</dbReference>
<dbReference type="FunFam" id="2.170.8.10:FF:000001">
    <property type="entry name" value="Phosphoenolpyruvate carboxykinase (ATP)"/>
    <property type="match status" value="1"/>
</dbReference>
<dbReference type="FunFam" id="3.40.449.10:FF:000001">
    <property type="entry name" value="Phosphoenolpyruvate carboxykinase (ATP)"/>
    <property type="match status" value="1"/>
</dbReference>
<dbReference type="Gene3D" id="3.90.228.20">
    <property type="match status" value="1"/>
</dbReference>
<dbReference type="Gene3D" id="3.40.449.10">
    <property type="entry name" value="Phosphoenolpyruvate Carboxykinase, domain 1"/>
    <property type="match status" value="1"/>
</dbReference>
<dbReference type="Gene3D" id="2.170.8.10">
    <property type="entry name" value="Phosphoenolpyruvate Carboxykinase, domain 2"/>
    <property type="match status" value="1"/>
</dbReference>
<dbReference type="HAMAP" id="MF_00453">
    <property type="entry name" value="PEPCK_ATP"/>
    <property type="match status" value="1"/>
</dbReference>
<dbReference type="InterPro" id="IPR001272">
    <property type="entry name" value="PEP_carboxykinase_ATP"/>
</dbReference>
<dbReference type="InterPro" id="IPR013035">
    <property type="entry name" value="PEP_carboxykinase_C"/>
</dbReference>
<dbReference type="InterPro" id="IPR008210">
    <property type="entry name" value="PEP_carboxykinase_N"/>
</dbReference>
<dbReference type="InterPro" id="IPR015994">
    <property type="entry name" value="PEPCK_ATP_CS"/>
</dbReference>
<dbReference type="NCBIfam" id="TIGR00224">
    <property type="entry name" value="pckA"/>
    <property type="match status" value="1"/>
</dbReference>
<dbReference type="NCBIfam" id="NF006819">
    <property type="entry name" value="PRK09344.1-1"/>
    <property type="match status" value="1"/>
</dbReference>
<dbReference type="NCBIfam" id="NF006820">
    <property type="entry name" value="PRK09344.1-2"/>
    <property type="match status" value="1"/>
</dbReference>
<dbReference type="NCBIfam" id="NF006821">
    <property type="entry name" value="PRK09344.1-3"/>
    <property type="match status" value="1"/>
</dbReference>
<dbReference type="PANTHER" id="PTHR30031:SF0">
    <property type="entry name" value="PHOSPHOENOLPYRUVATE CARBOXYKINASE (ATP)"/>
    <property type="match status" value="1"/>
</dbReference>
<dbReference type="PANTHER" id="PTHR30031">
    <property type="entry name" value="PHOSPHOENOLPYRUVATE CARBOXYKINASE ATP"/>
    <property type="match status" value="1"/>
</dbReference>
<dbReference type="Pfam" id="PF01293">
    <property type="entry name" value="PEPCK_ATP"/>
    <property type="match status" value="1"/>
</dbReference>
<dbReference type="PIRSF" id="PIRSF006294">
    <property type="entry name" value="PEP_crbxkin"/>
    <property type="match status" value="1"/>
</dbReference>
<dbReference type="SUPFAM" id="SSF68923">
    <property type="entry name" value="PEP carboxykinase N-terminal domain"/>
    <property type="match status" value="1"/>
</dbReference>
<dbReference type="SUPFAM" id="SSF53795">
    <property type="entry name" value="PEP carboxykinase-like"/>
    <property type="match status" value="1"/>
</dbReference>
<dbReference type="PROSITE" id="PS00532">
    <property type="entry name" value="PEPCK_ATP"/>
    <property type="match status" value="1"/>
</dbReference>
<gene>
    <name evidence="1" type="primary">pckA</name>
    <name type="ordered locus">CGSHiGG_07540</name>
</gene>
<organism>
    <name type="scientific">Haemophilus influenzae (strain PittGG)</name>
    <dbReference type="NCBI Taxonomy" id="374931"/>
    <lineage>
        <taxon>Bacteria</taxon>
        <taxon>Pseudomonadati</taxon>
        <taxon>Pseudomonadota</taxon>
        <taxon>Gammaproteobacteria</taxon>
        <taxon>Pasteurellales</taxon>
        <taxon>Pasteurellaceae</taxon>
        <taxon>Haemophilus</taxon>
    </lineage>
</organism>
<proteinExistence type="inferred from homology"/>
<keyword id="KW-0067">ATP-binding</keyword>
<keyword id="KW-0963">Cytoplasm</keyword>
<keyword id="KW-0210">Decarboxylase</keyword>
<keyword id="KW-0312">Gluconeogenesis</keyword>
<keyword id="KW-0456">Lyase</keyword>
<keyword id="KW-0464">Manganese</keyword>
<keyword id="KW-0479">Metal-binding</keyword>
<keyword id="KW-0547">Nucleotide-binding</keyword>